<organism>
    <name type="scientific">Oryza sativa subsp. japonica</name>
    <name type="common">Rice</name>
    <dbReference type="NCBI Taxonomy" id="39947"/>
    <lineage>
        <taxon>Eukaryota</taxon>
        <taxon>Viridiplantae</taxon>
        <taxon>Streptophyta</taxon>
        <taxon>Embryophyta</taxon>
        <taxon>Tracheophyta</taxon>
        <taxon>Spermatophyta</taxon>
        <taxon>Magnoliopsida</taxon>
        <taxon>Liliopsida</taxon>
        <taxon>Poales</taxon>
        <taxon>Poaceae</taxon>
        <taxon>BOP clade</taxon>
        <taxon>Oryzoideae</taxon>
        <taxon>Oryzeae</taxon>
        <taxon>Oryzinae</taxon>
        <taxon>Oryza</taxon>
        <taxon>Oryza sativa</taxon>
    </lineage>
</organism>
<dbReference type="EMBL" id="AC092558">
    <property type="protein sequence ID" value="AAP13012.1"/>
    <property type="molecule type" value="Genomic_DNA"/>
</dbReference>
<dbReference type="EMBL" id="DP000009">
    <property type="protein sequence ID" value="ABF98816.1"/>
    <property type="molecule type" value="Genomic_DNA"/>
</dbReference>
<dbReference type="EMBL" id="AP008209">
    <property type="protein sequence ID" value="BAF13147.1"/>
    <property type="molecule type" value="Genomic_DNA"/>
</dbReference>
<dbReference type="EMBL" id="AP014959">
    <property type="protein sequence ID" value="BAS86325.1"/>
    <property type="molecule type" value="Genomic_DNA"/>
</dbReference>
<dbReference type="EMBL" id="CM000140">
    <property type="protein sequence ID" value="EEE59909.1"/>
    <property type="molecule type" value="Genomic_DNA"/>
</dbReference>
<dbReference type="EMBL" id="AK067697">
    <property type="status" value="NOT_ANNOTATED_CDS"/>
    <property type="molecule type" value="mRNA"/>
</dbReference>
<dbReference type="RefSeq" id="XP_015630917.1">
    <property type="nucleotide sequence ID" value="XM_015775431.1"/>
</dbReference>
<dbReference type="SMR" id="Q84MN0"/>
<dbReference type="FunCoup" id="Q84MN0">
    <property type="interactions" value="245"/>
</dbReference>
<dbReference type="STRING" id="39947.Q84MN0"/>
<dbReference type="PaxDb" id="39947-Q84MN0"/>
<dbReference type="EnsemblPlants" id="Os03t0743500-02">
    <property type="protein sequence ID" value="Os03t0743500-02"/>
    <property type="gene ID" value="Os03g0743500"/>
</dbReference>
<dbReference type="Gramene" id="Os03t0743500-02">
    <property type="protein sequence ID" value="Os03t0743500-02"/>
    <property type="gene ID" value="Os03g0743500"/>
</dbReference>
<dbReference type="KEGG" id="dosa:Os03g0743500"/>
<dbReference type="eggNOG" id="KOG0027">
    <property type="taxonomic scope" value="Eukaryota"/>
</dbReference>
<dbReference type="HOGENOM" id="CLU_061288_2_0_1"/>
<dbReference type="InParanoid" id="Q84MN0"/>
<dbReference type="OrthoDB" id="26525at2759"/>
<dbReference type="Proteomes" id="UP000000763">
    <property type="component" value="Chromosome 3"/>
</dbReference>
<dbReference type="Proteomes" id="UP000007752">
    <property type="component" value="Chromosome 3"/>
</dbReference>
<dbReference type="Proteomes" id="UP000059680">
    <property type="component" value="Chromosome 3"/>
</dbReference>
<dbReference type="ExpressionAtlas" id="Q84MN0">
    <property type="expression patterns" value="baseline and differential"/>
</dbReference>
<dbReference type="GO" id="GO:0005737">
    <property type="term" value="C:cytoplasm"/>
    <property type="evidence" value="ECO:0000318"/>
    <property type="project" value="GO_Central"/>
</dbReference>
<dbReference type="GO" id="GO:0005509">
    <property type="term" value="F:calcium ion binding"/>
    <property type="evidence" value="ECO:0000318"/>
    <property type="project" value="GO_Central"/>
</dbReference>
<dbReference type="GO" id="GO:0030234">
    <property type="term" value="F:enzyme regulator activity"/>
    <property type="evidence" value="ECO:0000318"/>
    <property type="project" value="GO_Central"/>
</dbReference>
<dbReference type="CDD" id="cd00051">
    <property type="entry name" value="EFh"/>
    <property type="match status" value="2"/>
</dbReference>
<dbReference type="FunFam" id="1.10.238.10:FF:000305">
    <property type="entry name" value="Calmodulin, variant"/>
    <property type="match status" value="1"/>
</dbReference>
<dbReference type="FunFam" id="1.10.238.10:FF:000327">
    <property type="entry name" value="Calmodulin-like protein 11"/>
    <property type="match status" value="1"/>
</dbReference>
<dbReference type="Gene3D" id="1.10.238.10">
    <property type="entry name" value="EF-hand"/>
    <property type="match status" value="3"/>
</dbReference>
<dbReference type="InterPro" id="IPR050230">
    <property type="entry name" value="CALM/Myosin/TropC-like"/>
</dbReference>
<dbReference type="InterPro" id="IPR011992">
    <property type="entry name" value="EF-hand-dom_pair"/>
</dbReference>
<dbReference type="InterPro" id="IPR018247">
    <property type="entry name" value="EF_Hand_1_Ca_BS"/>
</dbReference>
<dbReference type="InterPro" id="IPR002048">
    <property type="entry name" value="EF_hand_dom"/>
</dbReference>
<dbReference type="PANTHER" id="PTHR23048:SF0">
    <property type="entry name" value="CALMODULIN LIKE 3"/>
    <property type="match status" value="1"/>
</dbReference>
<dbReference type="PANTHER" id="PTHR23048">
    <property type="entry name" value="MYOSIN LIGHT CHAIN 1, 3"/>
    <property type="match status" value="1"/>
</dbReference>
<dbReference type="Pfam" id="PF13499">
    <property type="entry name" value="EF-hand_7"/>
    <property type="match status" value="2"/>
</dbReference>
<dbReference type="SMART" id="SM00054">
    <property type="entry name" value="EFh"/>
    <property type="match status" value="4"/>
</dbReference>
<dbReference type="SUPFAM" id="SSF47473">
    <property type="entry name" value="EF-hand"/>
    <property type="match status" value="1"/>
</dbReference>
<dbReference type="PROSITE" id="PS00018">
    <property type="entry name" value="EF_HAND_1"/>
    <property type="match status" value="4"/>
</dbReference>
<dbReference type="PROSITE" id="PS50222">
    <property type="entry name" value="EF_HAND_2"/>
    <property type="match status" value="4"/>
</dbReference>
<reference key="1">
    <citation type="journal article" date="2005" name="Genome Res.">
        <title>Sequence, annotation, and analysis of synteny between rice chromosome 3 and diverged grass species.</title>
        <authorList>
            <consortium name="The rice chromosome 3 sequencing consortium"/>
            <person name="Buell C.R."/>
            <person name="Yuan Q."/>
            <person name="Ouyang S."/>
            <person name="Liu J."/>
            <person name="Zhu W."/>
            <person name="Wang A."/>
            <person name="Maiti R."/>
            <person name="Haas B."/>
            <person name="Wortman J."/>
            <person name="Pertea M."/>
            <person name="Jones K.M."/>
            <person name="Kim M."/>
            <person name="Overton L."/>
            <person name="Tsitrin T."/>
            <person name="Fadrosh D."/>
            <person name="Bera J."/>
            <person name="Weaver B."/>
            <person name="Jin S."/>
            <person name="Johri S."/>
            <person name="Reardon M."/>
            <person name="Webb K."/>
            <person name="Hill J."/>
            <person name="Moffat K."/>
            <person name="Tallon L."/>
            <person name="Van Aken S."/>
            <person name="Lewis M."/>
            <person name="Utterback T."/>
            <person name="Feldblyum T."/>
            <person name="Zismann V."/>
            <person name="Iobst S."/>
            <person name="Hsiao J."/>
            <person name="de Vazeille A.R."/>
            <person name="Salzberg S.L."/>
            <person name="White O."/>
            <person name="Fraser C.M."/>
            <person name="Yu Y."/>
            <person name="Kim H."/>
            <person name="Rambo T."/>
            <person name="Currie J."/>
            <person name="Collura K."/>
            <person name="Kernodle-Thompson S."/>
            <person name="Wei F."/>
            <person name="Kudrna K."/>
            <person name="Ammiraju J.S.S."/>
            <person name="Luo M."/>
            <person name="Goicoechea J.L."/>
            <person name="Wing R.A."/>
            <person name="Henry D."/>
            <person name="Oates R."/>
            <person name="Palmer M."/>
            <person name="Pries G."/>
            <person name="Saski C."/>
            <person name="Simmons J."/>
            <person name="Soderlund C."/>
            <person name="Nelson W."/>
            <person name="de la Bastide M."/>
            <person name="Spiegel L."/>
            <person name="Nascimento L."/>
            <person name="Huang E."/>
            <person name="Preston R."/>
            <person name="Zutavern T."/>
            <person name="Palmer L."/>
            <person name="O'Shaughnessy A."/>
            <person name="Dike S."/>
            <person name="McCombie W.R."/>
            <person name="Minx P."/>
            <person name="Cordum H."/>
            <person name="Wilson R."/>
            <person name="Jin W."/>
            <person name="Lee H.R."/>
            <person name="Jiang J."/>
            <person name="Jackson S."/>
        </authorList>
    </citation>
    <scope>NUCLEOTIDE SEQUENCE [LARGE SCALE GENOMIC DNA]</scope>
    <source>
        <strain>cv. Nipponbare</strain>
    </source>
</reference>
<reference key="2">
    <citation type="journal article" date="2005" name="Nature">
        <title>The map-based sequence of the rice genome.</title>
        <authorList>
            <consortium name="International rice genome sequencing project (IRGSP)"/>
        </authorList>
    </citation>
    <scope>NUCLEOTIDE SEQUENCE [LARGE SCALE GENOMIC DNA]</scope>
    <source>
        <strain>cv. Nipponbare</strain>
    </source>
</reference>
<reference key="3">
    <citation type="journal article" date="2008" name="Nucleic Acids Res.">
        <title>The rice annotation project database (RAP-DB): 2008 update.</title>
        <authorList>
            <consortium name="The rice annotation project (RAP)"/>
        </authorList>
    </citation>
    <scope>GENOME REANNOTATION</scope>
    <source>
        <strain>cv. Nipponbare</strain>
    </source>
</reference>
<reference key="4">
    <citation type="journal article" date="2013" name="Rice">
        <title>Improvement of the Oryza sativa Nipponbare reference genome using next generation sequence and optical map data.</title>
        <authorList>
            <person name="Kawahara Y."/>
            <person name="de la Bastide M."/>
            <person name="Hamilton J.P."/>
            <person name="Kanamori H."/>
            <person name="McCombie W.R."/>
            <person name="Ouyang S."/>
            <person name="Schwartz D.C."/>
            <person name="Tanaka T."/>
            <person name="Wu J."/>
            <person name="Zhou S."/>
            <person name="Childs K.L."/>
            <person name="Davidson R.M."/>
            <person name="Lin H."/>
            <person name="Quesada-Ocampo L."/>
            <person name="Vaillancourt B."/>
            <person name="Sakai H."/>
            <person name="Lee S.S."/>
            <person name="Kim J."/>
            <person name="Numa H."/>
            <person name="Itoh T."/>
            <person name="Buell C.R."/>
            <person name="Matsumoto T."/>
        </authorList>
    </citation>
    <scope>GENOME REANNOTATION</scope>
    <source>
        <strain>cv. Nipponbare</strain>
    </source>
</reference>
<reference key="5">
    <citation type="journal article" date="2005" name="PLoS Biol.">
        <title>The genomes of Oryza sativa: a history of duplications.</title>
        <authorList>
            <person name="Yu J."/>
            <person name="Wang J."/>
            <person name="Lin W."/>
            <person name="Li S."/>
            <person name="Li H."/>
            <person name="Zhou J."/>
            <person name="Ni P."/>
            <person name="Dong W."/>
            <person name="Hu S."/>
            <person name="Zeng C."/>
            <person name="Zhang J."/>
            <person name="Zhang Y."/>
            <person name="Li R."/>
            <person name="Xu Z."/>
            <person name="Li S."/>
            <person name="Li X."/>
            <person name="Zheng H."/>
            <person name="Cong L."/>
            <person name="Lin L."/>
            <person name="Yin J."/>
            <person name="Geng J."/>
            <person name="Li G."/>
            <person name="Shi J."/>
            <person name="Liu J."/>
            <person name="Lv H."/>
            <person name="Li J."/>
            <person name="Wang J."/>
            <person name="Deng Y."/>
            <person name="Ran L."/>
            <person name="Shi X."/>
            <person name="Wang X."/>
            <person name="Wu Q."/>
            <person name="Li C."/>
            <person name="Ren X."/>
            <person name="Wang J."/>
            <person name="Wang X."/>
            <person name="Li D."/>
            <person name="Liu D."/>
            <person name="Zhang X."/>
            <person name="Ji Z."/>
            <person name="Zhao W."/>
            <person name="Sun Y."/>
            <person name="Zhang Z."/>
            <person name="Bao J."/>
            <person name="Han Y."/>
            <person name="Dong L."/>
            <person name="Ji J."/>
            <person name="Chen P."/>
            <person name="Wu S."/>
            <person name="Liu J."/>
            <person name="Xiao Y."/>
            <person name="Bu D."/>
            <person name="Tan J."/>
            <person name="Yang L."/>
            <person name="Ye C."/>
            <person name="Zhang J."/>
            <person name="Xu J."/>
            <person name="Zhou Y."/>
            <person name="Yu Y."/>
            <person name="Zhang B."/>
            <person name="Zhuang S."/>
            <person name="Wei H."/>
            <person name="Liu B."/>
            <person name="Lei M."/>
            <person name="Yu H."/>
            <person name="Li Y."/>
            <person name="Xu H."/>
            <person name="Wei S."/>
            <person name="He X."/>
            <person name="Fang L."/>
            <person name="Zhang Z."/>
            <person name="Zhang Y."/>
            <person name="Huang X."/>
            <person name="Su Z."/>
            <person name="Tong W."/>
            <person name="Li J."/>
            <person name="Tong Z."/>
            <person name="Li S."/>
            <person name="Ye J."/>
            <person name="Wang L."/>
            <person name="Fang L."/>
            <person name="Lei T."/>
            <person name="Chen C.-S."/>
            <person name="Chen H.-C."/>
            <person name="Xu Z."/>
            <person name="Li H."/>
            <person name="Huang H."/>
            <person name="Zhang F."/>
            <person name="Xu H."/>
            <person name="Li N."/>
            <person name="Zhao C."/>
            <person name="Li S."/>
            <person name="Dong L."/>
            <person name="Huang Y."/>
            <person name="Li L."/>
            <person name="Xi Y."/>
            <person name="Qi Q."/>
            <person name="Li W."/>
            <person name="Zhang B."/>
            <person name="Hu W."/>
            <person name="Zhang Y."/>
            <person name="Tian X."/>
            <person name="Jiao Y."/>
            <person name="Liang X."/>
            <person name="Jin J."/>
            <person name="Gao L."/>
            <person name="Zheng W."/>
            <person name="Hao B."/>
            <person name="Liu S.-M."/>
            <person name="Wang W."/>
            <person name="Yuan L."/>
            <person name="Cao M."/>
            <person name="McDermott J."/>
            <person name="Samudrala R."/>
            <person name="Wang J."/>
            <person name="Wong G.K.-S."/>
            <person name="Yang H."/>
        </authorList>
    </citation>
    <scope>NUCLEOTIDE SEQUENCE [LARGE SCALE GENOMIC DNA]</scope>
    <source>
        <strain>cv. Nipponbare</strain>
    </source>
</reference>
<reference key="6">
    <citation type="journal article" date="2003" name="Science">
        <title>Collection, mapping, and annotation of over 28,000 cDNA clones from japonica rice.</title>
        <authorList>
            <consortium name="The rice full-length cDNA consortium"/>
        </authorList>
    </citation>
    <scope>NUCLEOTIDE SEQUENCE [LARGE SCALE MRNA]</scope>
    <source>
        <strain>cv. Nipponbare</strain>
    </source>
</reference>
<reference key="7">
    <citation type="journal article" date="2007" name="BMC Plant Biol.">
        <title>Genome-wide identification and analyses of the rice calmodulin and related potential calcium sensor proteins.</title>
        <authorList>
            <person name="Boonburapong B."/>
            <person name="Buaboocha T."/>
        </authorList>
    </citation>
    <scope>GENE FAMILY</scope>
    <scope>NOMENCLATURE</scope>
</reference>
<protein>
    <recommendedName>
        <fullName>Calmodulin-like protein 4</fullName>
    </recommendedName>
</protein>
<sequence length="154" mass="17333">MEGLTSEQMVAFQEAFLLFDKNGDGCITLEELAAVTRSLGLEPTDQELNDMMREVDTDGNGIIDFQEFLSLIARKMKDGDGDEELKEAFEVLDKDQNGFISPTELRTVMTNLGEKMTDEEVEQMIREADTDGDGQVNYDEFVIMMKNAERKISG</sequence>
<evidence type="ECO:0000250" key="1"/>
<evidence type="ECO:0000255" key="2">
    <source>
        <dbReference type="PROSITE-ProRule" id="PRU00448"/>
    </source>
</evidence>
<evidence type="ECO:0000305" key="3"/>
<evidence type="ECO:0000312" key="4">
    <source>
        <dbReference type="EMBL" id="EEE59909.1"/>
    </source>
</evidence>
<proteinExistence type="evidence at transcript level"/>
<feature type="chain" id="PRO_0000338419" description="Calmodulin-like protein 4">
    <location>
        <begin position="1"/>
        <end position="154"/>
    </location>
</feature>
<feature type="domain" description="EF-hand 1" evidence="2">
    <location>
        <begin position="7"/>
        <end position="42"/>
    </location>
</feature>
<feature type="domain" description="EF-hand 2" evidence="2">
    <location>
        <begin position="43"/>
        <end position="78"/>
    </location>
</feature>
<feature type="domain" description="EF-hand 3" evidence="2">
    <location>
        <begin position="80"/>
        <end position="115"/>
    </location>
</feature>
<feature type="domain" description="EF-hand 4" evidence="2">
    <location>
        <begin position="116"/>
        <end position="151"/>
    </location>
</feature>
<feature type="binding site" evidence="2">
    <location>
        <position position="20"/>
    </location>
    <ligand>
        <name>Ca(2+)</name>
        <dbReference type="ChEBI" id="CHEBI:29108"/>
        <label>1</label>
    </ligand>
</feature>
<feature type="binding site" evidence="2">
    <location>
        <position position="22"/>
    </location>
    <ligand>
        <name>Ca(2+)</name>
        <dbReference type="ChEBI" id="CHEBI:29108"/>
        <label>1</label>
    </ligand>
</feature>
<feature type="binding site" evidence="2">
    <location>
        <position position="24"/>
    </location>
    <ligand>
        <name>Ca(2+)</name>
        <dbReference type="ChEBI" id="CHEBI:29108"/>
        <label>1</label>
    </ligand>
</feature>
<feature type="binding site" evidence="2">
    <location>
        <position position="26"/>
    </location>
    <ligand>
        <name>Ca(2+)</name>
        <dbReference type="ChEBI" id="CHEBI:29108"/>
        <label>1</label>
    </ligand>
</feature>
<feature type="binding site" evidence="2">
    <location>
        <position position="31"/>
    </location>
    <ligand>
        <name>Ca(2+)</name>
        <dbReference type="ChEBI" id="CHEBI:29108"/>
        <label>1</label>
    </ligand>
</feature>
<feature type="binding site" evidence="2">
    <location>
        <position position="56"/>
    </location>
    <ligand>
        <name>Ca(2+)</name>
        <dbReference type="ChEBI" id="CHEBI:29108"/>
        <label>2</label>
    </ligand>
</feature>
<feature type="binding site" evidence="2">
    <location>
        <position position="58"/>
    </location>
    <ligand>
        <name>Ca(2+)</name>
        <dbReference type="ChEBI" id="CHEBI:29108"/>
        <label>2</label>
    </ligand>
</feature>
<feature type="binding site" evidence="2">
    <location>
        <position position="60"/>
    </location>
    <ligand>
        <name>Ca(2+)</name>
        <dbReference type="ChEBI" id="CHEBI:29108"/>
        <label>2</label>
    </ligand>
</feature>
<feature type="binding site" evidence="2">
    <location>
        <position position="67"/>
    </location>
    <ligand>
        <name>Ca(2+)</name>
        <dbReference type="ChEBI" id="CHEBI:29108"/>
        <label>2</label>
    </ligand>
</feature>
<feature type="binding site" evidence="2">
    <location>
        <position position="93"/>
    </location>
    <ligand>
        <name>Ca(2+)</name>
        <dbReference type="ChEBI" id="CHEBI:29108"/>
        <label>3</label>
    </ligand>
</feature>
<feature type="binding site" evidence="2">
    <location>
        <position position="95"/>
    </location>
    <ligand>
        <name>Ca(2+)</name>
        <dbReference type="ChEBI" id="CHEBI:29108"/>
        <label>3</label>
    </ligand>
</feature>
<feature type="binding site" evidence="2">
    <location>
        <position position="97"/>
    </location>
    <ligand>
        <name>Ca(2+)</name>
        <dbReference type="ChEBI" id="CHEBI:29108"/>
        <label>3</label>
    </ligand>
</feature>
<feature type="binding site" evidence="2">
    <location>
        <position position="104"/>
    </location>
    <ligand>
        <name>Ca(2+)</name>
        <dbReference type="ChEBI" id="CHEBI:29108"/>
        <label>3</label>
    </ligand>
</feature>
<feature type="binding site" evidence="2">
    <location>
        <position position="129"/>
    </location>
    <ligand>
        <name>Ca(2+)</name>
        <dbReference type="ChEBI" id="CHEBI:29108"/>
        <label>4</label>
    </ligand>
</feature>
<feature type="binding site" evidence="2">
    <location>
        <position position="131"/>
    </location>
    <ligand>
        <name>Ca(2+)</name>
        <dbReference type="ChEBI" id="CHEBI:29108"/>
        <label>4</label>
    </ligand>
</feature>
<feature type="binding site" evidence="2">
    <location>
        <position position="133"/>
    </location>
    <ligand>
        <name>Ca(2+)</name>
        <dbReference type="ChEBI" id="CHEBI:29108"/>
        <label>4</label>
    </ligand>
</feature>
<feature type="binding site" evidence="2">
    <location>
        <position position="135"/>
    </location>
    <ligand>
        <name>Ca(2+)</name>
        <dbReference type="ChEBI" id="CHEBI:29108"/>
        <label>4</label>
    </ligand>
</feature>
<feature type="binding site" evidence="2">
    <location>
        <position position="140"/>
    </location>
    <ligand>
        <name>Ca(2+)</name>
        <dbReference type="ChEBI" id="CHEBI:29108"/>
        <label>4</label>
    </ligand>
</feature>
<feature type="modified residue" description="N6,N6,N6-trimethyllysine" evidence="1">
    <location>
        <position position="115"/>
    </location>
</feature>
<feature type="sequence conflict" description="In Ref. 6; AK067697." evidence="3" ref="6">
    <original>M</original>
    <variation>V</variation>
    <location>
        <position position="76"/>
    </location>
</feature>
<gene>
    <name type="primary">CML4</name>
    <name type="ordered locus">Os03g0743500</name>
    <name type="ordered locus">LOC_Os03g53200</name>
    <name evidence="4" type="ORF">OsJ_12528</name>
    <name type="ORF">OSJNBb0036F07.4</name>
</gene>
<comment type="function">
    <text evidence="1">Potential calcium sensor.</text>
</comment>
<comment type="similarity">
    <text evidence="3">Belongs to the calmodulin family.</text>
</comment>
<accession>Q84MN0</accession>
<accession>B9FBR7</accession>
<name>CML4_ORYSJ</name>
<keyword id="KW-0106">Calcium</keyword>
<keyword id="KW-0479">Metal-binding</keyword>
<keyword id="KW-0488">Methylation</keyword>
<keyword id="KW-1185">Reference proteome</keyword>
<keyword id="KW-0677">Repeat</keyword>